<reference key="1">
    <citation type="journal article" date="1997" name="DNA Res.">
        <title>Structural analysis of Arabidopsis thaliana chromosome 5. II. Sequence features of the regions of 1,044,062 bp covered by thirteen physically assigned P1 clones.</title>
        <authorList>
            <person name="Kotani H."/>
            <person name="Nakamura Y."/>
            <person name="Sato S."/>
            <person name="Kaneko T."/>
            <person name="Asamizu E."/>
            <person name="Miyajima N."/>
            <person name="Tabata S."/>
        </authorList>
    </citation>
    <scope>NUCLEOTIDE SEQUENCE [LARGE SCALE GENOMIC DNA]</scope>
    <source>
        <strain>cv. Columbia</strain>
    </source>
</reference>
<reference key="2">
    <citation type="journal article" date="2017" name="Plant J.">
        <title>Araport11: a complete reannotation of the Arabidopsis thaliana reference genome.</title>
        <authorList>
            <person name="Cheng C.Y."/>
            <person name="Krishnakumar V."/>
            <person name="Chan A.P."/>
            <person name="Thibaud-Nissen F."/>
            <person name="Schobel S."/>
            <person name="Town C.D."/>
        </authorList>
    </citation>
    <scope>GENOME REANNOTATION</scope>
    <source>
        <strain>cv. Columbia</strain>
    </source>
</reference>
<reference key="3">
    <citation type="journal article" date="2003" name="Science">
        <title>Empirical analysis of transcriptional activity in the Arabidopsis genome.</title>
        <authorList>
            <person name="Yamada K."/>
            <person name="Lim J."/>
            <person name="Dale J.M."/>
            <person name="Chen H."/>
            <person name="Shinn P."/>
            <person name="Palm C.J."/>
            <person name="Southwick A.M."/>
            <person name="Wu H.C."/>
            <person name="Kim C.J."/>
            <person name="Nguyen M."/>
            <person name="Pham P.K."/>
            <person name="Cheuk R.F."/>
            <person name="Karlin-Newmann G."/>
            <person name="Liu S.X."/>
            <person name="Lam B."/>
            <person name="Sakano H."/>
            <person name="Wu T."/>
            <person name="Yu G."/>
            <person name="Miranda M."/>
            <person name="Quach H.L."/>
            <person name="Tripp M."/>
            <person name="Chang C.H."/>
            <person name="Lee J.M."/>
            <person name="Toriumi M.J."/>
            <person name="Chan M.M."/>
            <person name="Tang C.C."/>
            <person name="Onodera C.S."/>
            <person name="Deng J.M."/>
            <person name="Akiyama K."/>
            <person name="Ansari Y."/>
            <person name="Arakawa T."/>
            <person name="Banh J."/>
            <person name="Banno F."/>
            <person name="Bowser L."/>
            <person name="Brooks S.Y."/>
            <person name="Carninci P."/>
            <person name="Chao Q."/>
            <person name="Choy N."/>
            <person name="Enju A."/>
            <person name="Goldsmith A.D."/>
            <person name="Gurjal M."/>
            <person name="Hansen N.F."/>
            <person name="Hayashizaki Y."/>
            <person name="Johnson-Hopson C."/>
            <person name="Hsuan V.W."/>
            <person name="Iida K."/>
            <person name="Karnes M."/>
            <person name="Khan S."/>
            <person name="Koesema E."/>
            <person name="Ishida J."/>
            <person name="Jiang P.X."/>
            <person name="Jones T."/>
            <person name="Kawai J."/>
            <person name="Kamiya A."/>
            <person name="Meyers C."/>
            <person name="Nakajima M."/>
            <person name="Narusaka M."/>
            <person name="Seki M."/>
            <person name="Sakurai T."/>
            <person name="Satou M."/>
            <person name="Tamse R."/>
            <person name="Vaysberg M."/>
            <person name="Wallender E.K."/>
            <person name="Wong C."/>
            <person name="Yamamura Y."/>
            <person name="Yuan S."/>
            <person name="Shinozaki K."/>
            <person name="Davis R.W."/>
            <person name="Theologis A."/>
            <person name="Ecker J.R."/>
        </authorList>
    </citation>
    <scope>NUCLEOTIDE SEQUENCE [LARGE SCALE MRNA]</scope>
    <source>
        <strain>cv. Columbia</strain>
    </source>
</reference>
<reference key="4">
    <citation type="submission" date="2002-03" db="EMBL/GenBank/DDBJ databases">
        <title>Full-length cDNA from Arabidopsis thaliana.</title>
        <authorList>
            <person name="Brover V.V."/>
            <person name="Troukhan M.E."/>
            <person name="Alexandrov N.A."/>
            <person name="Lu Y.-P."/>
            <person name="Flavell R.B."/>
            <person name="Feldmann K.A."/>
        </authorList>
    </citation>
    <scope>NUCLEOTIDE SEQUENCE [LARGE SCALE MRNA]</scope>
</reference>
<dbReference type="EMBL" id="AB006698">
    <property type="protein sequence ID" value="BAB08248.1"/>
    <property type="status" value="ALT_SEQ"/>
    <property type="molecule type" value="Genomic_DNA"/>
</dbReference>
<dbReference type="EMBL" id="CP002688">
    <property type="protein sequence ID" value="AED95330.1"/>
    <property type="molecule type" value="Genomic_DNA"/>
</dbReference>
<dbReference type="EMBL" id="CP002688">
    <property type="protein sequence ID" value="ANM68284.1"/>
    <property type="molecule type" value="Genomic_DNA"/>
</dbReference>
<dbReference type="EMBL" id="CP002688">
    <property type="protein sequence ID" value="ANM68285.1"/>
    <property type="molecule type" value="Genomic_DNA"/>
</dbReference>
<dbReference type="EMBL" id="BT002010">
    <property type="protein sequence ID" value="AAN72021.1"/>
    <property type="molecule type" value="mRNA"/>
</dbReference>
<dbReference type="EMBL" id="BT006515">
    <property type="protein sequence ID" value="AAP21323.1"/>
    <property type="molecule type" value="mRNA"/>
</dbReference>
<dbReference type="EMBL" id="AY085452">
    <property type="protein sequence ID" value="AAM62678.1"/>
    <property type="molecule type" value="mRNA"/>
</dbReference>
<dbReference type="RefSeq" id="NP_001330049.1">
    <property type="nucleotide sequence ID" value="NM_001344655.1"/>
</dbReference>
<dbReference type="RefSeq" id="NP_001330050.1">
    <property type="nucleotide sequence ID" value="NM_001344654.1"/>
</dbReference>
<dbReference type="RefSeq" id="NP_568654.1">
    <property type="nucleotide sequence ID" value="NM_123971.3"/>
</dbReference>
<dbReference type="SMR" id="Q8LEF3"/>
<dbReference type="BioGRID" id="19893">
    <property type="interactions" value="1"/>
</dbReference>
<dbReference type="FunCoup" id="Q8LEF3">
    <property type="interactions" value="3754"/>
</dbReference>
<dbReference type="IntAct" id="Q8LEF3">
    <property type="interactions" value="1"/>
</dbReference>
<dbReference type="STRING" id="3702.Q8LEF3"/>
<dbReference type="PaxDb" id="3702-AT5G46030.1"/>
<dbReference type="ProteomicsDB" id="220659"/>
<dbReference type="EnsemblPlants" id="AT5G46030.1">
    <property type="protein sequence ID" value="AT5G46030.1"/>
    <property type="gene ID" value="AT5G46030"/>
</dbReference>
<dbReference type="EnsemblPlants" id="AT5G46030.2">
    <property type="protein sequence ID" value="AT5G46030.2"/>
    <property type="gene ID" value="AT5G46030"/>
</dbReference>
<dbReference type="EnsemblPlants" id="AT5G46030.3">
    <property type="protein sequence ID" value="AT5G46030.3"/>
    <property type="gene ID" value="AT5G46030"/>
</dbReference>
<dbReference type="GeneID" id="834644"/>
<dbReference type="Gramene" id="AT5G46030.1">
    <property type="protein sequence ID" value="AT5G46030.1"/>
    <property type="gene ID" value="AT5G46030"/>
</dbReference>
<dbReference type="Gramene" id="AT5G46030.2">
    <property type="protein sequence ID" value="AT5G46030.2"/>
    <property type="gene ID" value="AT5G46030"/>
</dbReference>
<dbReference type="Gramene" id="AT5G46030.3">
    <property type="protein sequence ID" value="AT5G46030.3"/>
    <property type="gene ID" value="AT5G46030"/>
</dbReference>
<dbReference type="KEGG" id="ath:AT5G46030"/>
<dbReference type="Araport" id="AT5G46030"/>
<dbReference type="TAIR" id="AT5G46030"/>
<dbReference type="eggNOG" id="KOG3214">
    <property type="taxonomic scope" value="Eukaryota"/>
</dbReference>
<dbReference type="HOGENOM" id="CLU_105983_1_0_1"/>
<dbReference type="InParanoid" id="Q8LEF3"/>
<dbReference type="OMA" id="CLDANKK"/>
<dbReference type="OrthoDB" id="445983at2759"/>
<dbReference type="PhylomeDB" id="Q8LEF3"/>
<dbReference type="PRO" id="PR:Q8LEF3"/>
<dbReference type="Proteomes" id="UP000006548">
    <property type="component" value="Chromosome 5"/>
</dbReference>
<dbReference type="ExpressionAtlas" id="Q8LEF3">
    <property type="expression patterns" value="baseline and differential"/>
</dbReference>
<dbReference type="GO" id="GO:0005634">
    <property type="term" value="C:nucleus"/>
    <property type="evidence" value="ECO:0007669"/>
    <property type="project" value="UniProtKB-SubCell"/>
</dbReference>
<dbReference type="GO" id="GO:0008270">
    <property type="term" value="F:zinc ion binding"/>
    <property type="evidence" value="ECO:0007669"/>
    <property type="project" value="UniProtKB-KW"/>
</dbReference>
<dbReference type="FunFam" id="2.20.25.190:FF:000001">
    <property type="entry name" value="Transcription elongation factor 1 homolog"/>
    <property type="match status" value="1"/>
</dbReference>
<dbReference type="Gene3D" id="2.20.25.190">
    <property type="match status" value="1"/>
</dbReference>
<dbReference type="InterPro" id="IPR007808">
    <property type="entry name" value="Elf1"/>
</dbReference>
<dbReference type="InterPro" id="IPR038567">
    <property type="entry name" value="T_Elf1_sf"/>
</dbReference>
<dbReference type="PANTHER" id="PTHR20934">
    <property type="entry name" value="TRANSCRIPTION ELONGATION FACTOR 1 HOMOLOG"/>
    <property type="match status" value="1"/>
</dbReference>
<dbReference type="PANTHER" id="PTHR20934:SF24">
    <property type="entry name" value="TRANSCRIPTION ELONGATION FACTOR 1 HOMOLOG"/>
    <property type="match status" value="1"/>
</dbReference>
<dbReference type="Pfam" id="PF05129">
    <property type="entry name" value="Zn_ribbon_Elf1"/>
    <property type="match status" value="1"/>
</dbReference>
<dbReference type="SUPFAM" id="SSF57783">
    <property type="entry name" value="Zinc beta-ribbon"/>
    <property type="match status" value="1"/>
</dbReference>
<name>ELOF1_ARATH</name>
<organism>
    <name type="scientific">Arabidopsis thaliana</name>
    <name type="common">Mouse-ear cress</name>
    <dbReference type="NCBI Taxonomy" id="3702"/>
    <lineage>
        <taxon>Eukaryota</taxon>
        <taxon>Viridiplantae</taxon>
        <taxon>Streptophyta</taxon>
        <taxon>Embryophyta</taxon>
        <taxon>Tracheophyta</taxon>
        <taxon>Spermatophyta</taxon>
        <taxon>Magnoliopsida</taxon>
        <taxon>eudicotyledons</taxon>
        <taxon>Gunneridae</taxon>
        <taxon>Pentapetalae</taxon>
        <taxon>rosids</taxon>
        <taxon>malvids</taxon>
        <taxon>Brassicales</taxon>
        <taxon>Brassicaceae</taxon>
        <taxon>Camelineae</taxon>
        <taxon>Arabidopsis</taxon>
    </lineage>
</organism>
<feature type="chain" id="PRO_0000120946" description="Transcription elongation factor 1 homolog">
    <location>
        <begin position="1"/>
        <end position="120"/>
    </location>
</feature>
<feature type="region of interest" description="Disordered" evidence="3">
    <location>
        <begin position="84"/>
        <end position="120"/>
    </location>
</feature>
<feature type="compositionally biased region" description="Acidic residues" evidence="3">
    <location>
        <begin position="84"/>
        <end position="110"/>
    </location>
</feature>
<feature type="binding site" evidence="2">
    <location>
        <position position="25"/>
    </location>
    <ligand>
        <name>Zn(2+)</name>
        <dbReference type="ChEBI" id="CHEBI:29105"/>
    </ligand>
</feature>
<feature type="binding site" evidence="2">
    <location>
        <position position="28"/>
    </location>
    <ligand>
        <name>Zn(2+)</name>
        <dbReference type="ChEBI" id="CHEBI:29105"/>
    </ligand>
</feature>
<feature type="binding site" evidence="2">
    <location>
        <position position="49"/>
    </location>
    <ligand>
        <name>Zn(2+)</name>
        <dbReference type="ChEBI" id="CHEBI:29105"/>
    </ligand>
</feature>
<feature type="binding site" evidence="2">
    <location>
        <position position="52"/>
    </location>
    <ligand>
        <name>Zn(2+)</name>
        <dbReference type="ChEBI" id="CHEBI:29105"/>
    </ligand>
</feature>
<accession>Q8LEF3</accession>
<accession>Q9FNL9</accession>
<sequence length="120" mass="13885">MGKRKSRAKPAPTKRMDKLDTIFSCPFCNHGSSVECIIDMKHLIGKAACRICEESFSTTITALTEAIDIYSEWIDECERVNTAEDDVVQEEEEEVEEEEEEEEEEDDEDDHVSVKRKYNF</sequence>
<gene>
    <name type="ordered locus">At5g46030</name>
    <name type="ORF">MCL19.8</name>
</gene>
<proteinExistence type="evidence at transcript level"/>
<comment type="function">
    <text evidence="1">Transcription elongation factor implicated in the maintenance of proper chromatin structure in actively transcribed regions.</text>
</comment>
<comment type="subcellular location">
    <subcellularLocation>
        <location evidence="1">Nucleus</location>
    </subcellularLocation>
</comment>
<comment type="similarity">
    <text evidence="4">Belongs to the ELOF1 family.</text>
</comment>
<comment type="sequence caution" evidence="4">
    <conflict type="erroneous gene model prediction">
        <sequence resource="EMBL-CDS" id="BAB08248"/>
    </conflict>
</comment>
<keyword id="KW-0479">Metal-binding</keyword>
<keyword id="KW-0539">Nucleus</keyword>
<keyword id="KW-1185">Reference proteome</keyword>
<keyword id="KW-0804">Transcription</keyword>
<keyword id="KW-0805">Transcription regulation</keyword>
<keyword id="KW-0862">Zinc</keyword>
<keyword id="KW-0863">Zinc-finger</keyword>
<protein>
    <recommendedName>
        <fullName>Transcription elongation factor 1 homolog</fullName>
    </recommendedName>
</protein>
<evidence type="ECO:0000250" key="1"/>
<evidence type="ECO:0000250" key="2">
    <source>
        <dbReference type="UniProtKB" id="P60003"/>
    </source>
</evidence>
<evidence type="ECO:0000256" key="3">
    <source>
        <dbReference type="SAM" id="MobiDB-lite"/>
    </source>
</evidence>
<evidence type="ECO:0000305" key="4"/>